<keyword id="KW-0456">Lyase</keyword>
<keyword id="KW-1185">Reference proteome</keyword>
<protein>
    <recommendedName>
        <fullName evidence="1">Cyanate hydratase</fullName>
        <shortName evidence="1">Cyanase</shortName>
        <ecNumber evidence="1">4.2.1.104</ecNumber>
    </recommendedName>
    <alternativeName>
        <fullName evidence="1">Cyanate hydrolase</fullName>
    </alternativeName>
    <alternativeName>
        <fullName evidence="1">Cyanate lyase</fullName>
    </alternativeName>
</protein>
<evidence type="ECO:0000255" key="1">
    <source>
        <dbReference type="HAMAP-Rule" id="MF_00535"/>
    </source>
</evidence>
<accession>Q46I00</accession>
<feature type="chain" id="PRO_1000051480" description="Cyanate hydratase">
    <location>
        <begin position="1"/>
        <end position="147"/>
    </location>
</feature>
<feature type="active site" evidence="1">
    <location>
        <position position="88"/>
    </location>
</feature>
<feature type="active site" evidence="1">
    <location>
        <position position="91"/>
    </location>
</feature>
<feature type="active site" evidence="1">
    <location>
        <position position="114"/>
    </location>
</feature>
<comment type="function">
    <text evidence="1">Catalyzes the reaction of cyanate with bicarbonate to produce ammonia and carbon dioxide.</text>
</comment>
<comment type="catalytic activity">
    <reaction evidence="1">
        <text>cyanate + hydrogencarbonate + 3 H(+) = NH4(+) + 2 CO2</text>
        <dbReference type="Rhea" id="RHEA:11120"/>
        <dbReference type="ChEBI" id="CHEBI:15378"/>
        <dbReference type="ChEBI" id="CHEBI:16526"/>
        <dbReference type="ChEBI" id="CHEBI:17544"/>
        <dbReference type="ChEBI" id="CHEBI:28938"/>
        <dbReference type="ChEBI" id="CHEBI:29195"/>
        <dbReference type="EC" id="4.2.1.104"/>
    </reaction>
</comment>
<comment type="similarity">
    <text evidence="1">Belongs to the cyanase family.</text>
</comment>
<name>CYNS_PROMT</name>
<dbReference type="EC" id="4.2.1.104" evidence="1"/>
<dbReference type="EMBL" id="CP000095">
    <property type="protein sequence ID" value="AAZ58878.1"/>
    <property type="molecule type" value="Genomic_DNA"/>
</dbReference>
<dbReference type="RefSeq" id="WP_011294022.1">
    <property type="nucleotide sequence ID" value="NC_007335.2"/>
</dbReference>
<dbReference type="SMR" id="Q46I00"/>
<dbReference type="STRING" id="59920.PMN2A_1390"/>
<dbReference type="KEGG" id="pmn:PMN2A_1390"/>
<dbReference type="HOGENOM" id="CLU_103452_1_0_3"/>
<dbReference type="OrthoDB" id="9785870at2"/>
<dbReference type="PhylomeDB" id="Q46I00"/>
<dbReference type="Proteomes" id="UP000002535">
    <property type="component" value="Chromosome"/>
</dbReference>
<dbReference type="GO" id="GO:0008824">
    <property type="term" value="F:cyanate hydratase activity"/>
    <property type="evidence" value="ECO:0007669"/>
    <property type="project" value="UniProtKB-UniRule"/>
</dbReference>
<dbReference type="GO" id="GO:0003677">
    <property type="term" value="F:DNA binding"/>
    <property type="evidence" value="ECO:0007669"/>
    <property type="project" value="InterPro"/>
</dbReference>
<dbReference type="GO" id="GO:0009439">
    <property type="term" value="P:cyanate metabolic process"/>
    <property type="evidence" value="ECO:0007669"/>
    <property type="project" value="UniProtKB-UniRule"/>
</dbReference>
<dbReference type="CDD" id="cd00559">
    <property type="entry name" value="Cyanase_C"/>
    <property type="match status" value="1"/>
</dbReference>
<dbReference type="Gene3D" id="3.30.1160.10">
    <property type="entry name" value="Cyanate lyase, C-terminal domain"/>
    <property type="match status" value="1"/>
</dbReference>
<dbReference type="Gene3D" id="1.10.260.40">
    <property type="entry name" value="lambda repressor-like DNA-binding domains"/>
    <property type="match status" value="1"/>
</dbReference>
<dbReference type="HAMAP" id="MF_00535">
    <property type="entry name" value="Cyanate_hydrat"/>
    <property type="match status" value="1"/>
</dbReference>
<dbReference type="InterPro" id="IPR008076">
    <property type="entry name" value="Cyanase"/>
</dbReference>
<dbReference type="InterPro" id="IPR003712">
    <property type="entry name" value="Cyanate_lyase_C"/>
</dbReference>
<dbReference type="InterPro" id="IPR036581">
    <property type="entry name" value="Cyanate_lyase_C_sf"/>
</dbReference>
<dbReference type="InterPro" id="IPR010982">
    <property type="entry name" value="Lambda_DNA-bd_dom_sf"/>
</dbReference>
<dbReference type="NCBIfam" id="TIGR00673">
    <property type="entry name" value="cynS"/>
    <property type="match status" value="1"/>
</dbReference>
<dbReference type="NCBIfam" id="NF002773">
    <property type="entry name" value="PRK02866.1"/>
    <property type="match status" value="1"/>
</dbReference>
<dbReference type="PANTHER" id="PTHR34186">
    <property type="entry name" value="CYANATE HYDRATASE"/>
    <property type="match status" value="1"/>
</dbReference>
<dbReference type="PANTHER" id="PTHR34186:SF2">
    <property type="entry name" value="CYANATE HYDRATASE"/>
    <property type="match status" value="1"/>
</dbReference>
<dbReference type="Pfam" id="PF02560">
    <property type="entry name" value="Cyanate_lyase"/>
    <property type="match status" value="1"/>
</dbReference>
<dbReference type="PIRSF" id="PIRSF001263">
    <property type="entry name" value="Cyanate_hydratas"/>
    <property type="match status" value="1"/>
</dbReference>
<dbReference type="PRINTS" id="PR01693">
    <property type="entry name" value="CYANASE"/>
</dbReference>
<dbReference type="SMART" id="SM01116">
    <property type="entry name" value="Cyanate_lyase"/>
    <property type="match status" value="1"/>
</dbReference>
<dbReference type="SUPFAM" id="SSF55234">
    <property type="entry name" value="Cyanase C-terminal domain"/>
    <property type="match status" value="1"/>
</dbReference>
<dbReference type="SUPFAM" id="SSF47413">
    <property type="entry name" value="lambda repressor-like DNA-binding domains"/>
    <property type="match status" value="1"/>
</dbReference>
<proteinExistence type="inferred from homology"/>
<sequence>MSFPESTQLLLKAKKEKGLTFADIGILLGLDEVWVASLFYGQSTASDEEADKLLTTLGLGAELKEILTTPPVKGSLDPVIPTDPLIYRFYEIMQVYGMPMKDVIQEKFGDGIMSAIDFTINVDKVEDPKGDRVKVAMCGKFLPYKKW</sequence>
<gene>
    <name evidence="1" type="primary">cynS</name>
    <name type="ordered locus">PMN2A_1390</name>
</gene>
<organism>
    <name type="scientific">Prochlorococcus marinus (strain NATL2A)</name>
    <dbReference type="NCBI Taxonomy" id="59920"/>
    <lineage>
        <taxon>Bacteria</taxon>
        <taxon>Bacillati</taxon>
        <taxon>Cyanobacteriota</taxon>
        <taxon>Cyanophyceae</taxon>
        <taxon>Synechococcales</taxon>
        <taxon>Prochlorococcaceae</taxon>
        <taxon>Prochlorococcus</taxon>
    </lineage>
</organism>
<reference key="1">
    <citation type="journal article" date="2007" name="PLoS Genet.">
        <title>Patterns and implications of gene gain and loss in the evolution of Prochlorococcus.</title>
        <authorList>
            <person name="Kettler G.C."/>
            <person name="Martiny A.C."/>
            <person name="Huang K."/>
            <person name="Zucker J."/>
            <person name="Coleman M.L."/>
            <person name="Rodrigue S."/>
            <person name="Chen F."/>
            <person name="Lapidus A."/>
            <person name="Ferriera S."/>
            <person name="Johnson J."/>
            <person name="Steglich C."/>
            <person name="Church G.M."/>
            <person name="Richardson P."/>
            <person name="Chisholm S.W."/>
        </authorList>
    </citation>
    <scope>NUCLEOTIDE SEQUENCE [LARGE SCALE GENOMIC DNA]</scope>
    <source>
        <strain>NATL2A</strain>
    </source>
</reference>